<dbReference type="EMBL" id="CR380953">
    <property type="protein sequence ID" value="CAG59664.1"/>
    <property type="molecule type" value="Genomic_DNA"/>
</dbReference>
<dbReference type="RefSeq" id="XP_446737.1">
    <property type="nucleotide sequence ID" value="XM_446737.1"/>
</dbReference>
<dbReference type="FunCoup" id="Q6FSQ7">
    <property type="interactions" value="68"/>
</dbReference>
<dbReference type="STRING" id="284593.Q6FSQ7"/>
<dbReference type="TCDB" id="2.A.1.2.115">
    <property type="family name" value="the major facilitator superfamily (mfs)"/>
</dbReference>
<dbReference type="GlyCosmos" id="Q6FSQ7">
    <property type="glycosylation" value="4 sites, No reported glycans"/>
</dbReference>
<dbReference type="EnsemblFungi" id="CAGL0G08624g-T">
    <property type="protein sequence ID" value="CAGL0G08624g-T-p1"/>
    <property type="gene ID" value="CAGL0G08624g"/>
</dbReference>
<dbReference type="GeneID" id="2888131"/>
<dbReference type="KEGG" id="cgr:2888131"/>
<dbReference type="CGD" id="CAL0130703">
    <property type="gene designation" value="QDR2"/>
</dbReference>
<dbReference type="VEuPathDB" id="FungiDB:CAGL0G08624g"/>
<dbReference type="eggNOG" id="KOG0255">
    <property type="taxonomic scope" value="Eukaryota"/>
</dbReference>
<dbReference type="HOGENOM" id="CLU_008455_8_4_1"/>
<dbReference type="InParanoid" id="Q6FSQ7"/>
<dbReference type="Proteomes" id="UP000002428">
    <property type="component" value="Chromosome G"/>
</dbReference>
<dbReference type="GO" id="GO:0005886">
    <property type="term" value="C:plasma membrane"/>
    <property type="evidence" value="ECO:0000314"/>
    <property type="project" value="CGD"/>
</dbReference>
<dbReference type="GO" id="GO:0042910">
    <property type="term" value="F:xenobiotic transmembrane transporter activity"/>
    <property type="evidence" value="ECO:0000315"/>
    <property type="project" value="CGD"/>
</dbReference>
<dbReference type="GO" id="GO:1990961">
    <property type="term" value="P:xenobiotic detoxification by transmembrane export across the plasma membrane"/>
    <property type="evidence" value="ECO:0000315"/>
    <property type="project" value="CGD"/>
</dbReference>
<dbReference type="CDD" id="cd17323">
    <property type="entry name" value="MFS_Tpo1_MDR_like"/>
    <property type="match status" value="1"/>
</dbReference>
<dbReference type="Gene3D" id="1.20.1250.20">
    <property type="entry name" value="MFS general substrate transporter like domains"/>
    <property type="match status" value="1"/>
</dbReference>
<dbReference type="InterPro" id="IPR011701">
    <property type="entry name" value="MFS"/>
</dbReference>
<dbReference type="InterPro" id="IPR020846">
    <property type="entry name" value="MFS_dom"/>
</dbReference>
<dbReference type="InterPro" id="IPR036259">
    <property type="entry name" value="MFS_trans_sf"/>
</dbReference>
<dbReference type="InterPro" id="IPR005829">
    <property type="entry name" value="Sugar_transporter_CS"/>
</dbReference>
<dbReference type="PANTHER" id="PTHR23502">
    <property type="entry name" value="MAJOR FACILITATOR SUPERFAMILY"/>
    <property type="match status" value="1"/>
</dbReference>
<dbReference type="PANTHER" id="PTHR23502:SF51">
    <property type="entry name" value="QUINIDINE RESISTANCE PROTEIN 1-RELATED"/>
    <property type="match status" value="1"/>
</dbReference>
<dbReference type="Pfam" id="PF07690">
    <property type="entry name" value="MFS_1"/>
    <property type="match status" value="1"/>
</dbReference>
<dbReference type="SUPFAM" id="SSF103473">
    <property type="entry name" value="MFS general substrate transporter"/>
    <property type="match status" value="1"/>
</dbReference>
<dbReference type="PROSITE" id="PS50850">
    <property type="entry name" value="MFS"/>
    <property type="match status" value="1"/>
</dbReference>
<dbReference type="PROSITE" id="PS00216">
    <property type="entry name" value="SUGAR_TRANSPORT_1"/>
    <property type="match status" value="1"/>
</dbReference>
<keyword id="KW-1003">Cell membrane</keyword>
<keyword id="KW-0325">Glycoprotein</keyword>
<keyword id="KW-0472">Membrane</keyword>
<keyword id="KW-1185">Reference proteome</keyword>
<keyword id="KW-0812">Transmembrane</keyword>
<keyword id="KW-1133">Transmembrane helix</keyword>
<keyword id="KW-0813">Transport</keyword>
<gene>
    <name evidence="6" type="primary">QDR2</name>
    <name type="ordered locus">CAGL0G08624g</name>
</gene>
<organism>
    <name type="scientific">Candida glabrata (strain ATCC 2001 / BCRC 20586 / JCM 3761 / NBRC 0622 / NRRL Y-65 / CBS 138)</name>
    <name type="common">Yeast</name>
    <name type="synonym">Nakaseomyces glabratus</name>
    <dbReference type="NCBI Taxonomy" id="284593"/>
    <lineage>
        <taxon>Eukaryota</taxon>
        <taxon>Fungi</taxon>
        <taxon>Dikarya</taxon>
        <taxon>Ascomycota</taxon>
        <taxon>Saccharomycotina</taxon>
        <taxon>Saccharomycetes</taxon>
        <taxon>Saccharomycetales</taxon>
        <taxon>Saccharomycetaceae</taxon>
        <taxon>Nakaseomyces</taxon>
    </lineage>
</organism>
<feature type="chain" id="PRO_0000443413" description="Multidrug transporter QDR2">
    <location>
        <begin position="1"/>
        <end position="583"/>
    </location>
</feature>
<feature type="transmembrane region" description="Helical" evidence="1">
    <location>
        <begin position="88"/>
        <end position="108"/>
    </location>
</feature>
<feature type="transmembrane region" description="Helical" evidence="1">
    <location>
        <begin position="121"/>
        <end position="141"/>
    </location>
</feature>
<feature type="transmembrane region" description="Helical" evidence="1">
    <location>
        <begin position="148"/>
        <end position="168"/>
    </location>
</feature>
<feature type="transmembrane region" description="Helical" evidence="1">
    <location>
        <begin position="178"/>
        <end position="198"/>
    </location>
</feature>
<feature type="transmembrane region" description="Helical" evidence="1">
    <location>
        <begin position="208"/>
        <end position="228"/>
    </location>
</feature>
<feature type="transmembrane region" description="Helical" evidence="1">
    <location>
        <begin position="238"/>
        <end position="258"/>
    </location>
</feature>
<feature type="transmembrane region" description="Helical" evidence="1">
    <location>
        <begin position="323"/>
        <end position="342"/>
    </location>
</feature>
<feature type="transmembrane region" description="Helical" evidence="1">
    <location>
        <begin position="354"/>
        <end position="374"/>
    </location>
</feature>
<feature type="transmembrane region" description="Helical" evidence="1">
    <location>
        <begin position="432"/>
        <end position="452"/>
    </location>
</feature>
<feature type="transmembrane region" description="Helical" evidence="1">
    <location>
        <begin position="458"/>
        <end position="478"/>
    </location>
</feature>
<feature type="transmembrane region" description="Helical" evidence="1">
    <location>
        <begin position="493"/>
        <end position="513"/>
    </location>
</feature>
<feature type="transmembrane region" description="Helical" evidence="1">
    <location>
        <begin position="524"/>
        <end position="544"/>
    </location>
</feature>
<feature type="region of interest" description="Disordered" evidence="3">
    <location>
        <begin position="23"/>
        <end position="46"/>
    </location>
</feature>
<feature type="glycosylation site" description="N-linked (GlcNAc...) asparagine" evidence="2">
    <location>
        <position position="60"/>
    </location>
</feature>
<feature type="glycosylation site" description="N-linked (GlcNAc...) asparagine" evidence="2">
    <location>
        <position position="120"/>
    </location>
</feature>
<feature type="glycosylation site" description="N-linked (GlcNAc...) asparagine" evidence="2">
    <location>
        <position position="267"/>
    </location>
</feature>
<feature type="glycosylation site" description="N-linked (GlcNAc...) asparagine" evidence="2">
    <location>
        <position position="380"/>
    </location>
</feature>
<reference key="1">
    <citation type="journal article" date="2004" name="Nature">
        <title>Genome evolution in yeasts.</title>
        <authorList>
            <person name="Dujon B."/>
            <person name="Sherman D."/>
            <person name="Fischer G."/>
            <person name="Durrens P."/>
            <person name="Casaregola S."/>
            <person name="Lafontaine I."/>
            <person name="de Montigny J."/>
            <person name="Marck C."/>
            <person name="Neuveglise C."/>
            <person name="Talla E."/>
            <person name="Goffard N."/>
            <person name="Frangeul L."/>
            <person name="Aigle M."/>
            <person name="Anthouard V."/>
            <person name="Babour A."/>
            <person name="Barbe V."/>
            <person name="Barnay S."/>
            <person name="Blanchin S."/>
            <person name="Beckerich J.-M."/>
            <person name="Beyne E."/>
            <person name="Bleykasten C."/>
            <person name="Boisrame A."/>
            <person name="Boyer J."/>
            <person name="Cattolico L."/>
            <person name="Confanioleri F."/>
            <person name="de Daruvar A."/>
            <person name="Despons L."/>
            <person name="Fabre E."/>
            <person name="Fairhead C."/>
            <person name="Ferry-Dumazet H."/>
            <person name="Groppi A."/>
            <person name="Hantraye F."/>
            <person name="Hennequin C."/>
            <person name="Jauniaux N."/>
            <person name="Joyet P."/>
            <person name="Kachouri R."/>
            <person name="Kerrest A."/>
            <person name="Koszul R."/>
            <person name="Lemaire M."/>
            <person name="Lesur I."/>
            <person name="Ma L."/>
            <person name="Muller H."/>
            <person name="Nicaud J.-M."/>
            <person name="Nikolski M."/>
            <person name="Oztas S."/>
            <person name="Ozier-Kalogeropoulos O."/>
            <person name="Pellenz S."/>
            <person name="Potier S."/>
            <person name="Richard G.-F."/>
            <person name="Straub M.-L."/>
            <person name="Suleau A."/>
            <person name="Swennen D."/>
            <person name="Tekaia F."/>
            <person name="Wesolowski-Louvel M."/>
            <person name="Westhof E."/>
            <person name="Wirth B."/>
            <person name="Zeniou-Meyer M."/>
            <person name="Zivanovic Y."/>
            <person name="Bolotin-Fukuhara M."/>
            <person name="Thierry A."/>
            <person name="Bouchier C."/>
            <person name="Caudron B."/>
            <person name="Scarpelli C."/>
            <person name="Gaillardin C."/>
            <person name="Weissenbach J."/>
            <person name="Wincker P."/>
            <person name="Souciet J.-L."/>
        </authorList>
    </citation>
    <scope>NUCLEOTIDE SEQUENCE [LARGE SCALE GENOMIC DNA]</scope>
    <source>
        <strain>ATCC 2001 / BCRC 20586 / JCM 3761 / NBRC 0622 / NRRL Y-65 / CBS 138</strain>
    </source>
</reference>
<reference key="2">
    <citation type="journal article" date="2013" name="Antimicrob. Agents Chemother.">
        <title>Candida glabrata drug:H+ antiporter CgQdr2 confers imidazole drug resistance, being activated by transcription factor CgPdr1.</title>
        <authorList>
            <person name="Costa C."/>
            <person name="Pires C."/>
            <person name="Cabrito T.R."/>
            <person name="Renaudin A."/>
            <person name="Ohno M."/>
            <person name="Chibana H."/>
            <person name="Sa-Correia I."/>
            <person name="Teixeira M.C."/>
        </authorList>
    </citation>
    <scope>DISRUPTION PHENOTYPE</scope>
    <scope>FUNCTION</scope>
    <scope>SUBCELLULAR LOCATION</scope>
    <scope>INDUCTION</scope>
</reference>
<reference key="3">
    <citation type="journal article" date="2016" name="Front. Microbiol.">
        <title>Clotrimazole drug resistance in Candida glabrata clinical isolates correlates with increased expression of the drug:H(+) antiporters CgAqr1, CgTpo1_1, CgTpo3, and CgQdr2.</title>
        <authorList>
            <person name="Costa C."/>
            <person name="Ribeiro J."/>
            <person name="Miranda I.M."/>
            <person name="Silva-Dias A."/>
            <person name="Cavalheiro M."/>
            <person name="Costa-de-Oliveira S."/>
            <person name="Rodrigues A.G."/>
            <person name="Teixeira M.C."/>
        </authorList>
    </citation>
    <scope>FUNCTION</scope>
</reference>
<sequence length="583" mass="64364">MMEDQQSLHSFISDYDQRSHAVEKYDGPDLSEVDSEDNDKMIKTNEDEAVKEPIYRTRSNQTEPDIANAPPYSRFDAKYKMALVLQCAYTGLFSTMAGAIYYPVLSVIEKQFHITEELVNITVVVYFIFQGIAPTLMGGLADSLGRRPVVLFAVTVYFGACIGLACAQTYAQIVVLRCLQAAGISPVIAINSGIIGDVTTRAERGGYVGYISGFQVLGSAFGALIGAGLSSRWGWRSIFWFLAIGSGVCLVFSIIMLPETKRTIVGNGSVTPRNYLNRAPLLMFPLIRRKLHLDDPEYETLEPRTQLSLLAPLSILKVKEISILLVTAGIQFATWSTHQTALSTVLSKNYHLSVAKIGLCYLPTGICTLISIVTSGRYLNWSYRRRFAKHKVWLKEQEEILVKENGYSREEVQNIINNDPKYVFNLVQTRLHAAFVTLLLSSSGFVAFGWCIDVKAPLASVLVMSGFASLFSNCILTFSTTLIVDIFPSKTSTATGCLNLFRCLLSALFIGCLSKMATSMTYGGVFTFLGALTALSACPLFYLLKNGREITLKRKRKEDASRAFALSVANEKAEAEGKAEESR</sequence>
<evidence type="ECO:0000255" key="1"/>
<evidence type="ECO:0000255" key="2">
    <source>
        <dbReference type="PROSITE-ProRule" id="PRU00498"/>
    </source>
</evidence>
<evidence type="ECO:0000256" key="3">
    <source>
        <dbReference type="SAM" id="MobiDB-lite"/>
    </source>
</evidence>
<evidence type="ECO:0000269" key="4">
    <source>
    </source>
</evidence>
<evidence type="ECO:0000269" key="5">
    <source>
    </source>
</evidence>
<evidence type="ECO:0000303" key="6">
    <source>
    </source>
</evidence>
<evidence type="ECO:0000303" key="7">
    <source>
    </source>
</evidence>
<evidence type="ECO:0000305" key="8"/>
<accession>Q6FSQ7</accession>
<proteinExistence type="evidence at transcript level"/>
<name>QDR2_CANGA</name>
<protein>
    <recommendedName>
        <fullName evidence="6">Multidrug transporter QDR2</fullName>
    </recommendedName>
    <alternativeName>
        <fullName evidence="6">Clotrimazole exporter QDR2</fullName>
    </alternativeName>
    <alternativeName>
        <fullName evidence="7">Drug:H(+) antiporter QDR2</fullName>
        <shortName evidence="7">DHA QDR2</shortName>
    </alternativeName>
</protein>
<comment type="function">
    <text evidence="4 5">Multidrug resistance transporter involved in resistance to the antifungal drugs miconazole, tioconazole, clotrimazole, and ketoconazole; as well as to quinidine (PubMed:23629708, PubMed:27148215). Decreases the intracellular accumulation of clotrimazole in and plays a role in the extrusion of this antifungal from preloaded cells (PubMed:23629708, PubMed:27148215).</text>
</comment>
<comment type="subcellular location">
    <subcellularLocation>
        <location evidence="4">Cell membrane</location>
        <topology evidence="1">Multi-pass membrane protein</topology>
    </subcellularLocation>
</comment>
<comment type="induction">
    <text evidence="4">Expression is up-regulated by clotrimazole and quinidine (PubMed:23629708). Expression is regulated by the pleiotropic drug resistance transcription factor PDR1 (PubMed:23629708).</text>
</comment>
<comment type="disruption phenotype">
    <text evidence="4">Leads to intracellular accumulation of clotrimazole (PubMed:23629708).</text>
</comment>
<comment type="similarity">
    <text evidence="8">Belongs to the major facilitator superfamily. CAR1 family.</text>
</comment>